<keyword id="KW-0963">Cytoplasm</keyword>
<keyword id="KW-0507">mRNA processing</keyword>
<keyword id="KW-0509">mRNA transport</keyword>
<keyword id="KW-0539">Nucleus</keyword>
<keyword id="KW-1185">Reference proteome</keyword>
<keyword id="KW-0677">Repeat</keyword>
<keyword id="KW-0694">RNA-binding</keyword>
<keyword id="KW-0810">Translation regulation</keyword>
<keyword id="KW-0813">Transport</keyword>
<organism>
    <name type="scientific">Scheffersomyces stipitis (strain ATCC 58785 / CBS 6054 / NBRC 10063 / NRRL Y-11545)</name>
    <name type="common">Yeast</name>
    <name type="synonym">Pichia stipitis</name>
    <dbReference type="NCBI Taxonomy" id="322104"/>
    <lineage>
        <taxon>Eukaryota</taxon>
        <taxon>Fungi</taxon>
        <taxon>Dikarya</taxon>
        <taxon>Ascomycota</taxon>
        <taxon>Saccharomycotina</taxon>
        <taxon>Pichiomycetes</taxon>
        <taxon>Debaryomycetaceae</taxon>
        <taxon>Scheffersomyces</taxon>
    </lineage>
</organism>
<accession>A3LXL0</accession>
<dbReference type="EMBL" id="CP000500">
    <property type="protein sequence ID" value="ABN67479.1"/>
    <property type="molecule type" value="Genomic_DNA"/>
</dbReference>
<dbReference type="RefSeq" id="XP_001385508.1">
    <property type="nucleotide sequence ID" value="XM_001385471.1"/>
</dbReference>
<dbReference type="SMR" id="A3LXL0"/>
<dbReference type="FunCoup" id="A3LXL0">
    <property type="interactions" value="1415"/>
</dbReference>
<dbReference type="STRING" id="322104.A3LXL0"/>
<dbReference type="GeneID" id="4840386"/>
<dbReference type="KEGG" id="pic:PICST_90501"/>
<dbReference type="eggNOG" id="KOG0123">
    <property type="taxonomic scope" value="Eukaryota"/>
</dbReference>
<dbReference type="HOGENOM" id="CLU_012062_22_4_1"/>
<dbReference type="InParanoid" id="A3LXL0"/>
<dbReference type="OMA" id="QQPGFMP"/>
<dbReference type="OrthoDB" id="19742at2759"/>
<dbReference type="Proteomes" id="UP000002258">
    <property type="component" value="Chromosome 6"/>
</dbReference>
<dbReference type="GO" id="GO:0010494">
    <property type="term" value="C:cytoplasmic stress granule"/>
    <property type="evidence" value="ECO:0007669"/>
    <property type="project" value="EnsemblFungi"/>
</dbReference>
<dbReference type="GO" id="GO:0071014">
    <property type="term" value="C:post-mRNA release spliceosomal complex"/>
    <property type="evidence" value="ECO:0007669"/>
    <property type="project" value="EnsemblFungi"/>
</dbReference>
<dbReference type="GO" id="GO:0005840">
    <property type="term" value="C:ribosome"/>
    <property type="evidence" value="ECO:0007669"/>
    <property type="project" value="EnsemblFungi"/>
</dbReference>
<dbReference type="GO" id="GO:0140693">
    <property type="term" value="F:molecular condensate scaffold activity"/>
    <property type="evidence" value="ECO:0007669"/>
    <property type="project" value="EnsemblFungi"/>
</dbReference>
<dbReference type="GO" id="GO:0008143">
    <property type="term" value="F:poly(A) binding"/>
    <property type="evidence" value="ECO:0007669"/>
    <property type="project" value="EnsemblFungi"/>
</dbReference>
<dbReference type="GO" id="GO:1990841">
    <property type="term" value="F:promoter-specific chromatin binding"/>
    <property type="evidence" value="ECO:0007669"/>
    <property type="project" value="EnsemblFungi"/>
</dbReference>
<dbReference type="GO" id="GO:0008428">
    <property type="term" value="F:ribonuclease inhibitor activity"/>
    <property type="evidence" value="ECO:0007669"/>
    <property type="project" value="EnsemblFungi"/>
</dbReference>
<dbReference type="GO" id="GO:0031124">
    <property type="term" value="P:mRNA 3'-end processing"/>
    <property type="evidence" value="ECO:0007669"/>
    <property type="project" value="EnsemblFungi"/>
</dbReference>
<dbReference type="GO" id="GO:0051028">
    <property type="term" value="P:mRNA transport"/>
    <property type="evidence" value="ECO:0007669"/>
    <property type="project" value="UniProtKB-KW"/>
</dbReference>
<dbReference type="GO" id="GO:0000289">
    <property type="term" value="P:nuclear-transcribed mRNA poly(A) tail shortening"/>
    <property type="evidence" value="ECO:0007669"/>
    <property type="project" value="EnsemblFungi"/>
</dbReference>
<dbReference type="GO" id="GO:0060211">
    <property type="term" value="P:regulation of nuclear-transcribed mRNA poly(A) tail shortening"/>
    <property type="evidence" value="ECO:0007669"/>
    <property type="project" value="EnsemblFungi"/>
</dbReference>
<dbReference type="GO" id="GO:0006446">
    <property type="term" value="P:regulation of translational initiation"/>
    <property type="evidence" value="ECO:0007669"/>
    <property type="project" value="EnsemblFungi"/>
</dbReference>
<dbReference type="CDD" id="cd12378">
    <property type="entry name" value="RRM1_I_PABPs"/>
    <property type="match status" value="1"/>
</dbReference>
<dbReference type="CDD" id="cd12379">
    <property type="entry name" value="RRM2_I_PABPs"/>
    <property type="match status" value="1"/>
</dbReference>
<dbReference type="CDD" id="cd12380">
    <property type="entry name" value="RRM3_I_PABPs"/>
    <property type="match status" value="1"/>
</dbReference>
<dbReference type="CDD" id="cd12381">
    <property type="entry name" value="RRM4_I_PABPs"/>
    <property type="match status" value="1"/>
</dbReference>
<dbReference type="FunFam" id="1.10.1900.10:FF:000008">
    <property type="entry name" value="Polyadenylate-binding protein"/>
    <property type="match status" value="1"/>
</dbReference>
<dbReference type="FunFam" id="3.30.70.330:FF:000003">
    <property type="entry name" value="Polyadenylate-binding protein"/>
    <property type="match status" value="1"/>
</dbReference>
<dbReference type="FunFam" id="3.30.70.330:FF:000211">
    <property type="entry name" value="Polyadenylate-binding protein"/>
    <property type="match status" value="1"/>
</dbReference>
<dbReference type="FunFam" id="3.30.70.330:FF:000384">
    <property type="entry name" value="Polyadenylate-binding protein"/>
    <property type="match status" value="1"/>
</dbReference>
<dbReference type="FunFam" id="3.30.70.330:FF:000385">
    <property type="entry name" value="Polyadenylate-binding protein"/>
    <property type="match status" value="1"/>
</dbReference>
<dbReference type="Gene3D" id="3.30.70.330">
    <property type="match status" value="4"/>
</dbReference>
<dbReference type="Gene3D" id="1.10.1900.10">
    <property type="entry name" value="c-terminal domain of poly(a) binding protein"/>
    <property type="match status" value="1"/>
</dbReference>
<dbReference type="InterPro" id="IPR012677">
    <property type="entry name" value="Nucleotide-bd_a/b_plait_sf"/>
</dbReference>
<dbReference type="InterPro" id="IPR036053">
    <property type="entry name" value="PABP-dom"/>
</dbReference>
<dbReference type="InterPro" id="IPR006515">
    <property type="entry name" value="PABP_1234"/>
</dbReference>
<dbReference type="InterPro" id="IPR002004">
    <property type="entry name" value="PABP_HYD_C"/>
</dbReference>
<dbReference type="InterPro" id="IPR034364">
    <property type="entry name" value="PABP_RRM1"/>
</dbReference>
<dbReference type="InterPro" id="IPR035979">
    <property type="entry name" value="RBD_domain_sf"/>
</dbReference>
<dbReference type="InterPro" id="IPR045305">
    <property type="entry name" value="RRM2_I_PABPs"/>
</dbReference>
<dbReference type="InterPro" id="IPR000504">
    <property type="entry name" value="RRM_dom"/>
</dbReference>
<dbReference type="InterPro" id="IPR003954">
    <property type="entry name" value="RRM_dom_euk"/>
</dbReference>
<dbReference type="NCBIfam" id="TIGR01628">
    <property type="entry name" value="PABP-1234"/>
    <property type="match status" value="1"/>
</dbReference>
<dbReference type="PANTHER" id="PTHR24012">
    <property type="entry name" value="RNA BINDING PROTEIN"/>
    <property type="match status" value="1"/>
</dbReference>
<dbReference type="Pfam" id="PF00658">
    <property type="entry name" value="MLLE"/>
    <property type="match status" value="1"/>
</dbReference>
<dbReference type="Pfam" id="PF00076">
    <property type="entry name" value="RRM_1"/>
    <property type="match status" value="4"/>
</dbReference>
<dbReference type="SMART" id="SM00517">
    <property type="entry name" value="PolyA"/>
    <property type="match status" value="1"/>
</dbReference>
<dbReference type="SMART" id="SM00360">
    <property type="entry name" value="RRM"/>
    <property type="match status" value="4"/>
</dbReference>
<dbReference type="SMART" id="SM00361">
    <property type="entry name" value="RRM_1"/>
    <property type="match status" value="4"/>
</dbReference>
<dbReference type="SUPFAM" id="SSF63570">
    <property type="entry name" value="PABC (PABP) domain"/>
    <property type="match status" value="1"/>
</dbReference>
<dbReference type="SUPFAM" id="SSF54928">
    <property type="entry name" value="RNA-binding domain, RBD"/>
    <property type="match status" value="2"/>
</dbReference>
<dbReference type="PROSITE" id="PS51309">
    <property type="entry name" value="PABC"/>
    <property type="match status" value="1"/>
</dbReference>
<dbReference type="PROSITE" id="PS50102">
    <property type="entry name" value="RRM"/>
    <property type="match status" value="4"/>
</dbReference>
<sequence>MSAADANQLQESLEKLNLDSAPAAAEEEAVAAESAPAGEEGADSANVAESTASLYVGELNTSVNEATLFEIFSPIGQVSSIRVCRDAVSKKSLGYAYVNYHKMEDGEKAIEELNYSPIEGRPCRIMWSQRDPSARRSGDGNIFIKNLHPAIDNKALHDTFSTFGKILSCKVATDDMGQSKCFGFVHYETAEAAEAAIENVNGMLLNDREVFVGKHISKKDRESKFEEIKANFTNIYVKNIDLEYSEEDLKKLFTPYGAITSIYLEKDAEGKSKGFGFVNYEGHEAAVKAVEELNDKEINGQKIYVGRAQKKRERMEELKKQYENTRLEKLSKYQGVNLFIKNLDDTIDSEKLEEEFKPFGTITSARVMVDETGKSKGFGFVCFSSPEEATKAITEMNQRMFFGKPLYVALAQRKDVRRSQLEQQIQARNQMRMQNAAATGGIPGQFIPPMFYGQQGFFPPNGRGNAPFPGPNPQMIMRRGQPFGGPEQWPRPGPNGQPVPVYGIPPQAYSDFNGQNIRQQRGYYPNRNQNKGRQQRDLAAIIASAPPDQQKRILGEELYPKIVATGKAQEPEAAGKITGMMLDLDNQEILALLEDDELFTNHFEDALTAFEEYKNSEAAAPVAPAAPAEPQA</sequence>
<evidence type="ECO:0000250" key="1"/>
<evidence type="ECO:0000255" key="2">
    <source>
        <dbReference type="PROSITE-ProRule" id="PRU00176"/>
    </source>
</evidence>
<evidence type="ECO:0000255" key="3">
    <source>
        <dbReference type="PROSITE-ProRule" id="PRU00641"/>
    </source>
</evidence>
<evidence type="ECO:0000256" key="4">
    <source>
        <dbReference type="SAM" id="MobiDB-lite"/>
    </source>
</evidence>
<evidence type="ECO:0000305" key="5"/>
<proteinExistence type="inferred from homology"/>
<name>PABP_PICST</name>
<reference key="1">
    <citation type="journal article" date="2007" name="Nat. Biotechnol.">
        <title>Genome sequence of the lignocellulose-bioconverting and xylose-fermenting yeast Pichia stipitis.</title>
        <authorList>
            <person name="Jeffries T.W."/>
            <person name="Grigoriev I.V."/>
            <person name="Grimwood J."/>
            <person name="Laplaza J.M."/>
            <person name="Aerts A."/>
            <person name="Salamov A."/>
            <person name="Schmutz J."/>
            <person name="Lindquist E."/>
            <person name="Dehal P."/>
            <person name="Shapiro H."/>
            <person name="Jin Y.-S."/>
            <person name="Passoth V."/>
            <person name="Richardson P.M."/>
        </authorList>
    </citation>
    <scope>NUCLEOTIDE SEQUENCE [LARGE SCALE GENOMIC DNA]</scope>
    <source>
        <strain>ATCC 58785 / CBS 6054 / NBRC 10063 / NRRL Y-11545</strain>
    </source>
</reference>
<protein>
    <recommendedName>
        <fullName>Polyadenylate-binding protein, cytoplasmic and nuclear</fullName>
        <shortName>PABP</shortName>
        <shortName>Poly(A)-binding protein</shortName>
    </recommendedName>
    <alternativeName>
        <fullName>Polyadenylate tail-binding protein</fullName>
    </alternativeName>
</protein>
<comment type="function">
    <text evidence="1">Binds the poly(A) tail of mRNA. Appears to be an important mediator of the multiple roles of the poly(A) tail in mRNA biogenesis, stability and translation. In the nucleus, involved in both mRNA cleavage and polyadenylation. Is also required for efficient mRNA export to the cytoplasm. Acts in concert with a poly(A)-specific nuclease (PAN) to affect poly(A) tail shortening, which may occur concomitantly with either nucleocytoplasmic mRNA transport or translational initiation. In the cytoplasm, stimulates translation initiation and regulates mRNA decay through translation termination-coupled poly(A) shortening, probably mediated by PAN (By similarity).</text>
</comment>
<comment type="subcellular location">
    <subcellularLocation>
        <location evidence="1">Cytoplasm</location>
    </subcellularLocation>
    <subcellularLocation>
        <location evidence="1">Nucleus</location>
    </subcellularLocation>
</comment>
<comment type="similarity">
    <text evidence="5">Belongs to the polyadenylate-binding protein type-1 family.</text>
</comment>
<gene>
    <name type="primary">PAB1</name>
    <name type="ORF">PICST_90501</name>
</gene>
<feature type="chain" id="PRO_0000295399" description="Polyadenylate-binding protein, cytoplasmic and nuclear">
    <location>
        <begin position="1"/>
        <end position="632"/>
    </location>
</feature>
<feature type="domain" description="RRM 1" evidence="2">
    <location>
        <begin position="52"/>
        <end position="130"/>
    </location>
</feature>
<feature type="domain" description="RRM 2" evidence="2">
    <location>
        <begin position="140"/>
        <end position="217"/>
    </location>
</feature>
<feature type="domain" description="RRM 3" evidence="2">
    <location>
        <begin position="233"/>
        <end position="310"/>
    </location>
</feature>
<feature type="domain" description="RRM 4" evidence="2">
    <location>
        <begin position="336"/>
        <end position="413"/>
    </location>
</feature>
<feature type="domain" description="PABC" evidence="3">
    <location>
        <begin position="534"/>
        <end position="615"/>
    </location>
</feature>
<feature type="region of interest" description="Disordered" evidence="4">
    <location>
        <begin position="1"/>
        <end position="43"/>
    </location>
</feature>
<feature type="compositionally biased region" description="Polar residues" evidence="4">
    <location>
        <begin position="1"/>
        <end position="11"/>
    </location>
</feature>
<feature type="compositionally biased region" description="Low complexity" evidence="4">
    <location>
        <begin position="31"/>
        <end position="43"/>
    </location>
</feature>